<accession>P09952</accession>
<gene>
    <name type="primary">fusA</name>
    <name type="synonym">fus</name>
</gene>
<name>EFG_MICLU</name>
<protein>
    <recommendedName>
        <fullName>Elongation factor G</fullName>
        <shortName>EF-G</shortName>
    </recommendedName>
</protein>
<comment type="function">
    <text evidence="1">Catalyzes the GTP-dependent ribosomal translocation step during translation elongation. During this step, the ribosome changes from the pre-translocational (PRE) to the post-translocational (POST) state as the newly formed A-site-bound peptidyl-tRNA and P-site-bound deacylated tRNA move to the P and E sites, respectively. Catalyzes the coordinated movement of the two tRNA molecules, the mRNA and conformational changes in the ribosome (By similarity).</text>
</comment>
<comment type="subcellular location">
    <subcellularLocation>
        <location evidence="1">Cytoplasm</location>
    </subcellularLocation>
</comment>
<comment type="similarity">
    <text evidence="2">Belongs to the TRAFAC class translation factor GTPase superfamily. Classic translation factor GTPase family. EF-G/EF-2 subfamily.</text>
</comment>
<organism>
    <name type="scientific">Micrococcus luteus</name>
    <name type="common">Micrococcus lysodeikticus</name>
    <dbReference type="NCBI Taxonomy" id="1270"/>
    <lineage>
        <taxon>Bacteria</taxon>
        <taxon>Bacillati</taxon>
        <taxon>Actinomycetota</taxon>
        <taxon>Actinomycetes</taxon>
        <taxon>Micrococcales</taxon>
        <taxon>Micrococcaceae</taxon>
        <taxon>Micrococcus</taxon>
    </lineage>
</organism>
<feature type="chain" id="PRO_0000091153" description="Elongation factor G">
    <location>
        <begin position="1"/>
        <end position="701"/>
    </location>
</feature>
<feature type="domain" description="tr-type G">
    <location>
        <begin position="6"/>
        <end position="285"/>
    </location>
</feature>
<feature type="binding site" evidence="1">
    <location>
        <begin position="15"/>
        <end position="22"/>
    </location>
    <ligand>
        <name>GTP</name>
        <dbReference type="ChEBI" id="CHEBI:37565"/>
    </ligand>
</feature>
<feature type="binding site" evidence="1">
    <location>
        <begin position="79"/>
        <end position="83"/>
    </location>
    <ligand>
        <name>GTP</name>
        <dbReference type="ChEBI" id="CHEBI:37565"/>
    </ligand>
</feature>
<feature type="binding site" evidence="1">
    <location>
        <begin position="133"/>
        <end position="136"/>
    </location>
    <ligand>
        <name>GTP</name>
        <dbReference type="ChEBI" id="CHEBI:37565"/>
    </ligand>
</feature>
<proteinExistence type="inferred from homology"/>
<evidence type="ECO:0000250" key="1"/>
<evidence type="ECO:0000305" key="2"/>
<reference key="1">
    <citation type="journal article" date="1987" name="J. Bacteriol.">
        <title>Organization and codon usage of the streptomycin operon in Micrococcus luteus, a bacterium with a high genomic G + C content.</title>
        <authorList>
            <person name="Ohama T."/>
            <person name="Yamao F."/>
            <person name="Muto A."/>
            <person name="Osawa S."/>
        </authorList>
    </citation>
    <scope>NUCLEOTIDE SEQUENCE [GENOMIC DNA]</scope>
</reference>
<dbReference type="EMBL" id="M17788">
    <property type="protein sequence ID" value="AAA25319.1"/>
    <property type="molecule type" value="Genomic_DNA"/>
</dbReference>
<dbReference type="PIR" id="C26956">
    <property type="entry name" value="C26956"/>
</dbReference>
<dbReference type="SMR" id="P09952"/>
<dbReference type="STRING" id="1232675.GCA_000309825_02164"/>
<dbReference type="GO" id="GO:0005737">
    <property type="term" value="C:cytoplasm"/>
    <property type="evidence" value="ECO:0007669"/>
    <property type="project" value="UniProtKB-SubCell"/>
</dbReference>
<dbReference type="GO" id="GO:0005525">
    <property type="term" value="F:GTP binding"/>
    <property type="evidence" value="ECO:0007669"/>
    <property type="project" value="UniProtKB-UniRule"/>
</dbReference>
<dbReference type="GO" id="GO:0003924">
    <property type="term" value="F:GTPase activity"/>
    <property type="evidence" value="ECO:0007669"/>
    <property type="project" value="InterPro"/>
</dbReference>
<dbReference type="GO" id="GO:0003746">
    <property type="term" value="F:translation elongation factor activity"/>
    <property type="evidence" value="ECO:0007669"/>
    <property type="project" value="UniProtKB-UniRule"/>
</dbReference>
<dbReference type="GO" id="GO:0032790">
    <property type="term" value="P:ribosome disassembly"/>
    <property type="evidence" value="ECO:0007669"/>
    <property type="project" value="TreeGrafter"/>
</dbReference>
<dbReference type="CDD" id="cd01886">
    <property type="entry name" value="EF-G"/>
    <property type="match status" value="1"/>
</dbReference>
<dbReference type="CDD" id="cd16262">
    <property type="entry name" value="EFG_III"/>
    <property type="match status" value="1"/>
</dbReference>
<dbReference type="CDD" id="cd01434">
    <property type="entry name" value="EFG_mtEFG1_IV"/>
    <property type="match status" value="1"/>
</dbReference>
<dbReference type="CDD" id="cd03713">
    <property type="entry name" value="EFG_mtEFG_C"/>
    <property type="match status" value="1"/>
</dbReference>
<dbReference type="CDD" id="cd04088">
    <property type="entry name" value="EFG_mtEFG_II"/>
    <property type="match status" value="1"/>
</dbReference>
<dbReference type="FunFam" id="2.40.30.10:FF:000006">
    <property type="entry name" value="Elongation factor G"/>
    <property type="match status" value="1"/>
</dbReference>
<dbReference type="FunFam" id="3.30.230.10:FF:000003">
    <property type="entry name" value="Elongation factor G"/>
    <property type="match status" value="1"/>
</dbReference>
<dbReference type="FunFam" id="3.30.70.240:FF:000001">
    <property type="entry name" value="Elongation factor G"/>
    <property type="match status" value="1"/>
</dbReference>
<dbReference type="FunFam" id="3.30.70.870:FF:000001">
    <property type="entry name" value="Elongation factor G"/>
    <property type="match status" value="1"/>
</dbReference>
<dbReference type="FunFam" id="3.40.50.300:FF:000029">
    <property type="entry name" value="Elongation factor G"/>
    <property type="match status" value="1"/>
</dbReference>
<dbReference type="Gene3D" id="3.30.230.10">
    <property type="match status" value="1"/>
</dbReference>
<dbReference type="Gene3D" id="3.30.70.240">
    <property type="match status" value="1"/>
</dbReference>
<dbReference type="Gene3D" id="3.30.70.870">
    <property type="entry name" value="Elongation Factor G (Translational Gtpase), domain 3"/>
    <property type="match status" value="1"/>
</dbReference>
<dbReference type="Gene3D" id="3.40.50.300">
    <property type="entry name" value="P-loop containing nucleotide triphosphate hydrolases"/>
    <property type="match status" value="1"/>
</dbReference>
<dbReference type="Gene3D" id="2.40.30.10">
    <property type="entry name" value="Translation factors"/>
    <property type="match status" value="1"/>
</dbReference>
<dbReference type="HAMAP" id="MF_00054_B">
    <property type="entry name" value="EF_G_EF_2_B"/>
    <property type="match status" value="1"/>
</dbReference>
<dbReference type="InterPro" id="IPR041095">
    <property type="entry name" value="EFG_II"/>
</dbReference>
<dbReference type="InterPro" id="IPR009022">
    <property type="entry name" value="EFG_III"/>
</dbReference>
<dbReference type="InterPro" id="IPR035647">
    <property type="entry name" value="EFG_III/V"/>
</dbReference>
<dbReference type="InterPro" id="IPR047872">
    <property type="entry name" value="EFG_IV"/>
</dbReference>
<dbReference type="InterPro" id="IPR035649">
    <property type="entry name" value="EFG_V"/>
</dbReference>
<dbReference type="InterPro" id="IPR000640">
    <property type="entry name" value="EFG_V-like"/>
</dbReference>
<dbReference type="InterPro" id="IPR004161">
    <property type="entry name" value="EFTu-like_2"/>
</dbReference>
<dbReference type="InterPro" id="IPR031157">
    <property type="entry name" value="G_TR_CS"/>
</dbReference>
<dbReference type="InterPro" id="IPR027417">
    <property type="entry name" value="P-loop_NTPase"/>
</dbReference>
<dbReference type="InterPro" id="IPR020568">
    <property type="entry name" value="Ribosomal_Su5_D2-typ_SF"/>
</dbReference>
<dbReference type="InterPro" id="IPR014721">
    <property type="entry name" value="Ribsml_uS5_D2-typ_fold_subgr"/>
</dbReference>
<dbReference type="InterPro" id="IPR005225">
    <property type="entry name" value="Small_GTP-bd"/>
</dbReference>
<dbReference type="InterPro" id="IPR000795">
    <property type="entry name" value="T_Tr_GTP-bd_dom"/>
</dbReference>
<dbReference type="InterPro" id="IPR009000">
    <property type="entry name" value="Transl_B-barrel_sf"/>
</dbReference>
<dbReference type="InterPro" id="IPR004540">
    <property type="entry name" value="Transl_elong_EFG/EF2"/>
</dbReference>
<dbReference type="InterPro" id="IPR005517">
    <property type="entry name" value="Transl_elong_EFG/EF2_IV"/>
</dbReference>
<dbReference type="NCBIfam" id="TIGR00484">
    <property type="entry name" value="EF-G"/>
    <property type="match status" value="1"/>
</dbReference>
<dbReference type="NCBIfam" id="NF009381">
    <property type="entry name" value="PRK12740.1-5"/>
    <property type="match status" value="1"/>
</dbReference>
<dbReference type="NCBIfam" id="TIGR00231">
    <property type="entry name" value="small_GTP"/>
    <property type="match status" value="1"/>
</dbReference>
<dbReference type="PANTHER" id="PTHR43261:SF1">
    <property type="entry name" value="RIBOSOME-RELEASING FACTOR 2, MITOCHONDRIAL"/>
    <property type="match status" value="1"/>
</dbReference>
<dbReference type="PANTHER" id="PTHR43261">
    <property type="entry name" value="TRANSLATION ELONGATION FACTOR G-RELATED"/>
    <property type="match status" value="1"/>
</dbReference>
<dbReference type="Pfam" id="PF00679">
    <property type="entry name" value="EFG_C"/>
    <property type="match status" value="1"/>
</dbReference>
<dbReference type="Pfam" id="PF14492">
    <property type="entry name" value="EFG_III"/>
    <property type="match status" value="1"/>
</dbReference>
<dbReference type="Pfam" id="PF03764">
    <property type="entry name" value="EFG_IV"/>
    <property type="match status" value="1"/>
</dbReference>
<dbReference type="Pfam" id="PF00009">
    <property type="entry name" value="GTP_EFTU"/>
    <property type="match status" value="1"/>
</dbReference>
<dbReference type="Pfam" id="PF03144">
    <property type="entry name" value="GTP_EFTU_D2"/>
    <property type="match status" value="1"/>
</dbReference>
<dbReference type="PRINTS" id="PR00315">
    <property type="entry name" value="ELONGATNFCT"/>
</dbReference>
<dbReference type="SMART" id="SM00838">
    <property type="entry name" value="EFG_C"/>
    <property type="match status" value="1"/>
</dbReference>
<dbReference type="SMART" id="SM00889">
    <property type="entry name" value="EFG_IV"/>
    <property type="match status" value="1"/>
</dbReference>
<dbReference type="SUPFAM" id="SSF54980">
    <property type="entry name" value="EF-G C-terminal domain-like"/>
    <property type="match status" value="2"/>
</dbReference>
<dbReference type="SUPFAM" id="SSF52540">
    <property type="entry name" value="P-loop containing nucleoside triphosphate hydrolases"/>
    <property type="match status" value="1"/>
</dbReference>
<dbReference type="SUPFAM" id="SSF54211">
    <property type="entry name" value="Ribosomal protein S5 domain 2-like"/>
    <property type="match status" value="1"/>
</dbReference>
<dbReference type="SUPFAM" id="SSF50447">
    <property type="entry name" value="Translation proteins"/>
    <property type="match status" value="1"/>
</dbReference>
<dbReference type="PROSITE" id="PS00301">
    <property type="entry name" value="G_TR_1"/>
    <property type="match status" value="1"/>
</dbReference>
<dbReference type="PROSITE" id="PS51722">
    <property type="entry name" value="G_TR_2"/>
    <property type="match status" value="1"/>
</dbReference>
<sequence>MLTDLHKVRNIGIMAHIDAGKTTTTERHLFYTGVNHKLGETHDGGATTDWMEQEKERGITITSAAVTCFWNDHQINIIDNPGHVDFTVEVERSLRVLDGAVAVFDGKEGVEPQSETVWRQADKYDVPRICFVNKMDKLGADFYFTVDTIVKRLGARPLVMQLPIGAENDFVGVVDLISMKAFVWPGDANGIVTMGASYEIEIRQLQEKAEEEYRNELVEAVAETSEELMEKYLEGEELTVEEIQAGVRQLTVNAEAYPVFCGSAFKNRGVQPMLDAVVAYLPNPLDAGPVKGHAVNDEEVVLEREVSKEAPFSALAFKIATHPFFGTLTFIRVYSGRLESGAQVLNATKGKKERIGKLFQMHANKENPVDEVVAGHIYAVIGLKDTTTGDTLCDPANPIILESMTFPEPVISVAIEPKTKGDQEKLSTAIQKLVAEDPTFRVNLNEETGQTEIGGMGELHLDVFVDRMKREFKVEANVGKPQVAYRETIKRKVDKVDYTHKKQTGGSGQFAKVQLSFEPLDTPRGTVYEFENAITGGRVPREYIPSVDAGIQDAMKFGVLAGYPMVRVKATSLDGAYHDVDSSEMAFRIAGSQAFKEGVRKATPIILEPLMAVEVRTPEEFMGDVIGDLNSRRGQIQIQSMEDATGVKVVNALVPLSEMFGYIGDLRSKTQGRAVYSMTFHSYAEVPKAVADEIVQKSQGE</sequence>
<keyword id="KW-0963">Cytoplasm</keyword>
<keyword id="KW-0251">Elongation factor</keyword>
<keyword id="KW-0342">GTP-binding</keyword>
<keyword id="KW-0547">Nucleotide-binding</keyword>
<keyword id="KW-0648">Protein biosynthesis</keyword>